<name>RAB8A_HUMAN</name>
<evidence type="ECO:0000250" key="1">
    <source>
        <dbReference type="UniProtKB" id="P35280"/>
    </source>
</evidence>
<evidence type="ECO:0000250" key="2">
    <source>
        <dbReference type="UniProtKB" id="P55258"/>
    </source>
</evidence>
<evidence type="ECO:0000250" key="3">
    <source>
        <dbReference type="UniProtKB" id="P61007"/>
    </source>
</evidence>
<evidence type="ECO:0000250" key="4">
    <source>
        <dbReference type="UniProtKB" id="P62820"/>
    </source>
</evidence>
<evidence type="ECO:0000250" key="5">
    <source>
        <dbReference type="UniProtKB" id="Q92930"/>
    </source>
</evidence>
<evidence type="ECO:0000255" key="6"/>
<evidence type="ECO:0000269" key="7">
    <source>
    </source>
</evidence>
<evidence type="ECO:0000269" key="8">
    <source>
    </source>
</evidence>
<evidence type="ECO:0000269" key="9">
    <source>
    </source>
</evidence>
<evidence type="ECO:0000269" key="10">
    <source>
    </source>
</evidence>
<evidence type="ECO:0000269" key="11">
    <source>
    </source>
</evidence>
<evidence type="ECO:0000269" key="12">
    <source>
    </source>
</evidence>
<evidence type="ECO:0000269" key="13">
    <source>
    </source>
</evidence>
<evidence type="ECO:0000269" key="14">
    <source>
    </source>
</evidence>
<evidence type="ECO:0000269" key="15">
    <source>
    </source>
</evidence>
<evidence type="ECO:0000269" key="16">
    <source>
    </source>
</evidence>
<evidence type="ECO:0000269" key="17">
    <source>
    </source>
</evidence>
<evidence type="ECO:0000269" key="18">
    <source>
    </source>
</evidence>
<evidence type="ECO:0000269" key="19">
    <source>
    </source>
</evidence>
<evidence type="ECO:0000269" key="20">
    <source>
    </source>
</evidence>
<evidence type="ECO:0000269" key="21">
    <source>
    </source>
</evidence>
<evidence type="ECO:0000269" key="22">
    <source>
    </source>
</evidence>
<evidence type="ECO:0000269" key="23">
    <source>
    </source>
</evidence>
<evidence type="ECO:0000269" key="24">
    <source>
    </source>
</evidence>
<evidence type="ECO:0000269" key="25">
    <source>
    </source>
</evidence>
<evidence type="ECO:0000269" key="26">
    <source>
    </source>
</evidence>
<evidence type="ECO:0000269" key="27">
    <source>
    </source>
</evidence>
<evidence type="ECO:0000269" key="28">
    <source>
    </source>
</evidence>
<evidence type="ECO:0000269" key="29">
    <source>
    </source>
</evidence>
<evidence type="ECO:0000303" key="30">
    <source>
    </source>
</evidence>
<evidence type="ECO:0000305" key="31"/>
<evidence type="ECO:0000305" key="32">
    <source>
    </source>
</evidence>
<evidence type="ECO:0000305" key="33">
    <source>
    </source>
</evidence>
<evidence type="ECO:0000305" key="34">
    <source>
    </source>
</evidence>
<evidence type="ECO:0000305" key="35">
    <source>
    </source>
</evidence>
<evidence type="ECO:0000312" key="36">
    <source>
        <dbReference type="HGNC" id="HGNC:7007"/>
    </source>
</evidence>
<evidence type="ECO:0007744" key="37">
    <source>
        <dbReference type="PDB" id="3QBT"/>
    </source>
</evidence>
<evidence type="ECO:0007744" key="38">
    <source>
        <dbReference type="PDB" id="5SZI"/>
    </source>
</evidence>
<evidence type="ECO:0007744" key="39">
    <source>
    </source>
</evidence>
<evidence type="ECO:0007744" key="40">
    <source>
    </source>
</evidence>
<evidence type="ECO:0007744" key="41">
    <source>
    </source>
</evidence>
<evidence type="ECO:0007744" key="42">
    <source>
    </source>
</evidence>
<evidence type="ECO:0007744" key="43">
    <source>
    </source>
</evidence>
<evidence type="ECO:0007829" key="44">
    <source>
        <dbReference type="PDB" id="4LHW"/>
    </source>
</evidence>
<evidence type="ECO:0007829" key="45">
    <source>
        <dbReference type="PDB" id="4LHX"/>
    </source>
</evidence>
<evidence type="ECO:0007829" key="46">
    <source>
        <dbReference type="PDB" id="6STF"/>
    </source>
</evidence>
<evidence type="ECO:0007829" key="47">
    <source>
        <dbReference type="PDB" id="7BWT"/>
    </source>
</evidence>
<feature type="chain" id="PRO_0000121130" description="Ras-related protein Rab-8A">
    <location>
        <begin position="1"/>
        <end position="204"/>
    </location>
</feature>
<feature type="propeptide" id="PRO_0000370793" description="Removed in mature form" evidence="6">
    <location>
        <begin position="205"/>
        <end position="207"/>
    </location>
</feature>
<feature type="short sequence motif" description="Switch 1" evidence="4">
    <location>
        <begin position="31"/>
        <end position="45"/>
    </location>
</feature>
<feature type="short sequence motif" description="Switch 2" evidence="4">
    <location>
        <begin position="63"/>
        <end position="80"/>
    </location>
</feature>
<feature type="binding site" evidence="34 35 37 38">
    <location>
        <position position="17"/>
    </location>
    <ligand>
        <name>GTP</name>
        <dbReference type="ChEBI" id="CHEBI:37565"/>
    </ligand>
</feature>
<feature type="binding site" evidence="35 38">
    <location>
        <position position="18"/>
    </location>
    <ligand>
        <name>GTP</name>
        <dbReference type="ChEBI" id="CHEBI:37565"/>
    </ligand>
</feature>
<feature type="binding site" evidence="35 38">
    <location>
        <position position="19"/>
    </location>
    <ligand>
        <name>GTP</name>
        <dbReference type="ChEBI" id="CHEBI:37565"/>
    </ligand>
</feature>
<feature type="binding site" evidence="34 35 37 38">
    <location>
        <position position="20"/>
    </location>
    <ligand>
        <name>GTP</name>
        <dbReference type="ChEBI" id="CHEBI:37565"/>
    </ligand>
</feature>
<feature type="binding site" evidence="34 35 37 38">
    <location>
        <position position="21"/>
    </location>
    <ligand>
        <name>GTP</name>
        <dbReference type="ChEBI" id="CHEBI:37565"/>
    </ligand>
</feature>
<feature type="binding site" evidence="34 35 37 38">
    <location>
        <position position="22"/>
    </location>
    <ligand>
        <name>GTP</name>
        <dbReference type="ChEBI" id="CHEBI:37565"/>
    </ligand>
</feature>
<feature type="binding site" evidence="16 24 37 38">
    <location>
        <position position="22"/>
    </location>
    <ligand>
        <name>Mg(2+)</name>
        <dbReference type="ChEBI" id="CHEBI:18420"/>
    </ligand>
</feature>
<feature type="binding site" evidence="34 35 37 38">
    <location>
        <position position="23"/>
    </location>
    <ligand>
        <name>GTP</name>
        <dbReference type="ChEBI" id="CHEBI:37565"/>
    </ligand>
</feature>
<feature type="binding site" evidence="35 38">
    <location>
        <position position="35"/>
    </location>
    <ligand>
        <name>GTP</name>
        <dbReference type="ChEBI" id="CHEBI:37565"/>
    </ligand>
</feature>
<feature type="binding site" evidence="34 37">
    <location>
        <position position="39"/>
    </location>
    <ligand>
        <name>GTP</name>
        <dbReference type="ChEBI" id="CHEBI:37565"/>
    </ligand>
</feature>
<feature type="binding site" evidence="34 37">
    <location>
        <position position="40"/>
    </location>
    <ligand>
        <name>GTP</name>
        <dbReference type="ChEBI" id="CHEBI:37565"/>
    </ligand>
</feature>
<feature type="binding site" evidence="16 24 37 38">
    <location>
        <position position="40"/>
    </location>
    <ligand>
        <name>Mg(2+)</name>
        <dbReference type="ChEBI" id="CHEBI:18420"/>
    </ligand>
</feature>
<feature type="binding site" evidence="16 37">
    <location>
        <position position="63"/>
    </location>
    <ligand>
        <name>Mg(2+)</name>
        <dbReference type="ChEBI" id="CHEBI:18420"/>
    </ligand>
</feature>
<feature type="binding site" evidence="34 35 37 38">
    <location>
        <position position="66"/>
    </location>
    <ligand>
        <name>GTP</name>
        <dbReference type="ChEBI" id="CHEBI:37565"/>
    </ligand>
</feature>
<feature type="binding site" evidence="34 35 37 38">
    <location>
        <position position="121"/>
    </location>
    <ligand>
        <name>GTP</name>
        <dbReference type="ChEBI" id="CHEBI:37565"/>
    </ligand>
</feature>
<feature type="binding site" evidence="34 35 37 38">
    <location>
        <position position="122"/>
    </location>
    <ligand>
        <name>GTP</name>
        <dbReference type="ChEBI" id="CHEBI:37565"/>
    </ligand>
</feature>
<feature type="binding site" evidence="34 35 37 38">
    <location>
        <position position="124"/>
    </location>
    <ligand>
        <name>GTP</name>
        <dbReference type="ChEBI" id="CHEBI:37565"/>
    </ligand>
</feature>
<feature type="binding site" evidence="34 35 37 38">
    <location>
        <position position="152"/>
    </location>
    <ligand>
        <name>GTP</name>
        <dbReference type="ChEBI" id="CHEBI:37565"/>
    </ligand>
</feature>
<feature type="binding site" evidence="34 35 37 38">
    <location>
        <position position="153"/>
    </location>
    <ligand>
        <name>GTP</name>
        <dbReference type="ChEBI" id="CHEBI:37565"/>
    </ligand>
</feature>
<feature type="modified residue" description="Phosphothreonine; by LRRK2" evidence="22 25 26 27">
    <location>
        <position position="72"/>
    </location>
</feature>
<feature type="modified residue" description="Phosphoserine" evidence="40">
    <location>
        <position position="181"/>
    </location>
</feature>
<feature type="modified residue" description="Phosphoserine" evidence="39 40 41 42 43">
    <location>
        <position position="185"/>
    </location>
</feature>
<feature type="modified residue" description="Cysteine methyl ester" evidence="6">
    <location>
        <position position="204"/>
    </location>
</feature>
<feature type="lipid moiety-binding region" description="S-geranylgeranyl cysteine" evidence="29">
    <location>
        <position position="204"/>
    </location>
</feature>
<feature type="splice variant" id="VSP_056399" description="In isoform 2." evidence="30">
    <original>AFFTLARDIKAKMDKKLEGNSPQGSNQGVKITPDQQKRSSFFRCV</original>
    <variation>RYQSKNGQKIGRQQPPGEQPGSQNHTGPAEEEQLFPMCSSVRNTA</variation>
    <location>
        <begin position="161"/>
        <end position="205"/>
    </location>
</feature>
<feature type="mutagenesis site" description="Loss of interaction with MICAL1. Loss of GRAF1/ARHGAP26 and GRAF2/ARHGAP10 tubular localization. Loss of E-cadherin and MMP14 export. Stimulates interaction with RPGR." evidence="10 11">
    <original>T</original>
    <variation>N</variation>
    <location>
        <position position="22"/>
    </location>
</feature>
<feature type="mutagenesis site" description="Probable constitutively active mutant locked in the active GTP-bound form. Stimulates interaction with MICALL1. Increased WDR44-positive tubulation. No change in interaction with RPGR, compared to wild-type." evidence="10 11 28">
    <original>Q</original>
    <variation>L</variation>
    <location>
        <position position="67"/>
    </location>
</feature>
<feature type="mutagenesis site" description="Loss of phosphorylation. No effect on the binding of GDP or GTP. Localizes primarily to the Golgi complex but does not affect membrane localization. Does not translocate to LRRK2-positive lysosomes and does not suppress lysosomal enlargement." evidence="22 25 26 27">
    <original>T</original>
    <variation>A</variation>
    <location>
        <position position="72"/>
    </location>
</feature>
<feature type="mutagenesis site" description="Phosphomimetic mutant. Suppresses interaction with GDI1." evidence="26">
    <original>T</original>
    <variation>D</variation>
    <location>
        <position position="72"/>
    </location>
</feature>
<feature type="mutagenesis site" description="Phosphomimetic mutant. No effect on the binding of GDP or GTP. Loss of GDI1, GDI2, CHM, CHML, RABGGTA, RABGGTB, RAB3IP, TBC1D15, and INPP5B binding. Increases localization to the cell membrane." evidence="22 25 26 27">
    <original>T</original>
    <variation>E</variation>
    <location>
        <position position="72"/>
    </location>
</feature>
<feature type="sequence conflict" description="In Ref. 2; AAB19681." evidence="31" ref="2">
    <original>LEGNSPQ</original>
    <variation>WKATAP</variation>
    <location>
        <begin position="177"/>
        <end position="183"/>
    </location>
</feature>
<feature type="strand" evidence="44">
    <location>
        <begin position="7"/>
        <end position="14"/>
    </location>
</feature>
<feature type="helix" evidence="44">
    <location>
        <begin position="21"/>
        <end position="30"/>
    </location>
</feature>
<feature type="strand" evidence="47">
    <location>
        <begin position="34"/>
        <end position="36"/>
    </location>
</feature>
<feature type="turn" evidence="45">
    <location>
        <begin position="38"/>
        <end position="41"/>
    </location>
</feature>
<feature type="strand" evidence="44">
    <location>
        <begin position="42"/>
        <end position="52"/>
    </location>
</feature>
<feature type="strand" evidence="44">
    <location>
        <begin position="55"/>
        <end position="64"/>
    </location>
</feature>
<feature type="strand" evidence="46">
    <location>
        <begin position="65"/>
        <end position="67"/>
    </location>
</feature>
<feature type="turn" evidence="44">
    <location>
        <begin position="69"/>
        <end position="72"/>
    </location>
</feature>
<feature type="helix" evidence="44">
    <location>
        <begin position="73"/>
        <end position="78"/>
    </location>
</feature>
<feature type="strand" evidence="44">
    <location>
        <begin position="82"/>
        <end position="89"/>
    </location>
</feature>
<feature type="helix" evidence="44">
    <location>
        <begin position="93"/>
        <end position="97"/>
    </location>
</feature>
<feature type="helix" evidence="44">
    <location>
        <begin position="99"/>
        <end position="109"/>
    </location>
</feature>
<feature type="strand" evidence="44">
    <location>
        <begin position="115"/>
        <end position="121"/>
    </location>
</feature>
<feature type="turn" evidence="45">
    <location>
        <begin position="122"/>
        <end position="124"/>
    </location>
</feature>
<feature type="helix" evidence="44">
    <location>
        <begin position="126"/>
        <end position="128"/>
    </location>
</feature>
<feature type="helix" evidence="44">
    <location>
        <begin position="133"/>
        <end position="142"/>
    </location>
</feature>
<feature type="strand" evidence="44">
    <location>
        <begin position="146"/>
        <end position="149"/>
    </location>
</feature>
<feature type="turn" evidence="44">
    <location>
        <begin position="152"/>
        <end position="155"/>
    </location>
</feature>
<feature type="helix" evidence="44">
    <location>
        <begin position="158"/>
        <end position="174"/>
    </location>
</feature>
<comment type="function">
    <text evidence="1 2 11 13 15 17 21 23 26 27 28">The small GTPases Rab are key regulators of intracellular membrane trafficking, from the formation of transport vesicles to their fusion with membranes. Rabs cycle between an inactive GDP-bound form and an active GTP-bound form that is able to recruit to membranes different sets of downstream effectors directly responsible for vesicle formation, movement, tethering and fusion. RAB8A is involved in polarized vesicular trafficking and neurotransmitter release. Together with RAB11A, RAB3IP, the exocyst complex, PARD3, PRKCI, ANXA2, CDC42 and DNMBP promotes transcytosis of PODXL to the apical membrane initiation sites (AMIS), apical surface formation and lumenogenesis (PubMed:20890297). Regulates the compacted morphology of the Golgi (PubMed:26209634). Together with MYO5B and RAB11A participates in epithelial cell polarization (PubMed:21282656). Also involved in membrane trafficking to the cilium and ciliogenesis (PubMed:21844891, PubMed:30398148, PubMed:20631154). Together with MICALL2, may also regulate adherens junction assembly (By similarity). May play a role in insulin-induced transport to the plasma membrane of the glucose transporter GLUT4 and therefore play a role in glucose homeostasis (By similarity). Involved in autophagy (PubMed:27103069). Participates in the export of a subset of neosynthesized proteins through a Rab8-Rab10-Rab11-dependent endososomal export route (PubMed:32344433). Targeted to and stabilized on stressed lysosomes through LRRK2 phosphorylation (PubMed:30209220). Suppresses stress-induced lysosomal enlargement through EHBP1 and EHNP1L1 effector proteins (PubMed:30209220).</text>
</comment>
<comment type="catalytic activity">
    <reaction evidence="33">
        <text>GTP + H2O = GDP + phosphate + H(+)</text>
        <dbReference type="Rhea" id="RHEA:19669"/>
        <dbReference type="ChEBI" id="CHEBI:15377"/>
        <dbReference type="ChEBI" id="CHEBI:15378"/>
        <dbReference type="ChEBI" id="CHEBI:37565"/>
        <dbReference type="ChEBI" id="CHEBI:43474"/>
        <dbReference type="ChEBI" id="CHEBI:58189"/>
        <dbReference type="EC" id="3.6.5.2"/>
    </reaction>
    <physiologicalReaction direction="left-to-right" evidence="33">
        <dbReference type="Rhea" id="RHEA:19670"/>
    </physiologicalReaction>
</comment>
<comment type="cofactor">
    <cofactor evidence="16 24">
        <name>Mg(2+)</name>
        <dbReference type="ChEBI" id="CHEBI:18420"/>
    </cofactor>
</comment>
<comment type="activity regulation">
    <text evidence="1 7 31">Regulated by guanine nucleotide exchange factors (GEFs) such as RAB3IP/Rabin8 and RPGR which promote the exchange of bound GDP for free GTP, GTPase activating proteins (GAPs) which increase the GTP hydrolysis activity, and GDP dissociation inhibitors (GDIs) which inhibit the dissociation of the nucleotide from the GTPase (PubMed:12221131, PubMed:20631154). Activated in response to insulin (By similarity).</text>
</comment>
<comment type="subunit">
    <text evidence="2 7 8 9 10 11 12 15 16 18 19 20 22 24 25 27 28">Interacts (GTP-bound form) with MICALL1; regulates RAB8A association with recycling endosomes (By similarity). Interacts with MICALL2; competes with RAB13 and is involved in E-cadherin endocytic recycling (By similarity). Interacts (GTP-bound form) with MICAL1, MICALCL, MICAL3, EHBP1 and EHBP1L1; at least in case of MICAL1, MICALCL, MICAL3 and EHBP1L1 two molecules of RAB8A can bind to one molecule of the effector protein; ternary complexes of RAB8A, RAB13 and either MICAL1 or EHBP1L1 are possible (PubMed:27552051, PubMed:32344433). Interacts with EHD1 (PubMed:19864458). Interacts with MAP4K2 and SYTL4 (By similarity). Interacts with SGSM1 and SGSM3 (By similarity). Interacts with RABIF, RIMS2, RPH3A and RPH3A (By similarity). Interacts with OPTN (PubMed:15837803). Interacts with RAB3IP, RAB3IP functions as guanine exchange factor (GEF) (PubMed:12221131). Interacts with MYO5B (PubMed:21282656). Interacts with CIMAP3 (PubMed:20643351). Interacts with BIRC6/bruce (PubMed:18329369). Interacts with OCRL (PubMed:21378754, PubMed:22543976). Interacts with AHI1 (By similarity). Interacts with DCDC1 (PubMed:22159412). Interacts with LRRK2; interaction facilitates phosphorylation of Thr-72 (PubMed:26824392). Interacts with RAB31P, GDI1, GDI2, CHM, CHML, RABGGTA, RABGGTB, TBC1D15 and INPP5B; these interactions are dependent on Thr-72 not being phosphorylated (PubMed:26824392, PubMed:29125462). Interacts with RILPL1 and RILPL2; these interactions are dependent on the phosphorylation of Thr-72 by LRRK2 (PubMed:29125462, PubMed:30398148). Interacts with DZIP1; prevents inhibition by the GDP-dissociation inhibitor GDI2 (PubMed:25860027). Interacts (in GDP-bound form) with RAB3IP/Rabin8, RAB3IP functions as guanine exchange factor (GEF) towards RAB8A (PubMed:12221131). Interacts (in GDP-bound form) with RPGR, RPGR functions as GEF towards RAB8A (PubMed:20631154).</text>
</comment>
<comment type="interaction">
    <interactant intactId="EBI-722293">
        <id>P61006</id>
    </interactant>
    <interactant intactId="EBI-5323863">
        <id>Q5S007</id>
        <label>LRRK2</label>
    </interactant>
    <organismsDiffer>false</organismsDiffer>
    <experiments>9</experiments>
</comment>
<comment type="interaction">
    <interactant intactId="EBI-722293">
        <id>P61006</id>
    </interactant>
    <interactant intactId="EBI-6148898">
        <id>Q01968</id>
        <label>OCRL</label>
    </interactant>
    <organismsDiffer>false</organismsDiffer>
    <experiments>15</experiments>
</comment>
<comment type="interaction">
    <interactant intactId="EBI-722293">
        <id>P61006</id>
    </interactant>
    <interactant intactId="EBI-748974">
        <id>Q96CV9</id>
        <label>OPTN</label>
    </interactant>
    <organismsDiffer>false</organismsDiffer>
    <experiments>4</experiments>
</comment>
<comment type="interaction">
    <interactant intactId="EBI-722293">
        <id>P61006</id>
    </interactant>
    <interactant intactId="EBI-747844">
        <id>Q96QF0</id>
        <label>RAB3IP</label>
    </interactant>
    <organismsDiffer>false</organismsDiffer>
    <experiments>5</experiments>
</comment>
<comment type="interaction">
    <interactant intactId="EBI-722293">
        <id>P61006</id>
    </interactant>
    <interactant intactId="EBI-747865">
        <id>Q96QF0-2</id>
        <label>RAB3IP</label>
    </interactant>
    <organismsDiffer>false</organismsDiffer>
    <experiments>2</experiments>
</comment>
<comment type="interaction">
    <interactant intactId="EBI-722293">
        <id>P61006</id>
    </interactant>
    <interactant intactId="EBI-713992">
        <id>P47224</id>
        <label>RABIF</label>
    </interactant>
    <organismsDiffer>false</organismsDiffer>
    <experiments>8</experiments>
</comment>
<comment type="interaction">
    <interactant intactId="EBI-722293">
        <id>P61006</id>
    </interactant>
    <interactant intactId="EBI-2797110">
        <id>Q5EBL4</id>
        <label>RILPL1</label>
    </interactant>
    <organismsDiffer>false</organismsDiffer>
    <experiments>2</experiments>
</comment>
<comment type="interaction">
    <interactant intactId="EBI-722293">
        <id>P61006</id>
    </interactant>
    <interactant intactId="EBI-717552">
        <id>Q969X0</id>
        <label>RILPL2</label>
    </interactant>
    <organismsDiffer>false</organismsDiffer>
    <experiments>8</experiments>
</comment>
<comment type="interaction">
    <interactant intactId="EBI-722293">
        <id>P61006</id>
    </interactant>
    <interactant intactId="EBI-1023301">
        <id>O60271</id>
        <label>SPAG9</label>
    </interactant>
    <organismsDiffer>false</organismsDiffer>
    <experiments>3</experiments>
</comment>
<comment type="interaction">
    <interactant intactId="EBI-722293">
        <id>P61006</id>
    </interactant>
    <interactant intactId="EBI-6417967">
        <id>Q5ZWZ3</id>
        <label>lpg0940</label>
    </interactant>
    <organismsDiffer>true</organismsDiffer>
    <experiments>3</experiments>
</comment>
<comment type="interaction">
    <interactant intactId="EBI-722293">
        <id>P61006</id>
    </interactant>
    <interactant intactId="EBI-25475871">
        <id>PRO_0000449625</id>
        <label>rep</label>
        <dbReference type="UniProtKB" id="P0DTD1"/>
    </interactant>
    <organismsDiffer>true</organismsDiffer>
    <experiments>3</experiments>
</comment>
<comment type="subcellular location">
    <subcellularLocation>
        <location evidence="22 32">Cell membrane</location>
        <topology evidence="32">Lipid-anchor</topology>
        <orientation evidence="32">Cytoplasmic side</orientation>
    </subcellularLocation>
    <subcellularLocation>
        <location evidence="8">Golgi apparatus</location>
    </subcellularLocation>
    <subcellularLocation>
        <location evidence="28">Endosome membrane</location>
    </subcellularLocation>
    <subcellularLocation>
        <location evidence="10">Recycling endosome membrane</location>
    </subcellularLocation>
    <subcellularLocation>
        <location evidence="17 25">Cell projection</location>
        <location evidence="17 25">Cilium</location>
    </subcellularLocation>
    <subcellularLocation>
        <location evidence="14">Cytoplasmic vesicle</location>
        <location evidence="14">Phagosome</location>
    </subcellularLocation>
    <subcellularLocation>
        <location evidence="5">Cytoplasmic vesicle</location>
        <location evidence="5">Phagosome membrane</location>
        <topology evidence="5">Lipid-anchor</topology>
        <orientation evidence="5">Cytoplasmic side</orientation>
    </subcellularLocation>
    <subcellularLocation>
        <location evidence="2">Cytoplasm</location>
        <location evidence="2">Cytoskeleton</location>
        <location evidence="2">Microtubule organizing center</location>
        <location evidence="2">Centrosome</location>
        <location evidence="2">Centriole</location>
    </subcellularLocation>
    <subcellularLocation>
        <location evidence="27">Cytoplasm</location>
        <location evidence="27">Cytoskeleton</location>
        <location evidence="27">Cilium basal body</location>
    </subcellularLocation>
    <subcellularLocation>
        <location evidence="18">Midbody</location>
    </subcellularLocation>
    <subcellularLocation>
        <location evidence="27">Cytoplasm</location>
        <location evidence="27">Cytoskeleton</location>
        <location evidence="27">Cilium axoneme</location>
    </subcellularLocation>
    <subcellularLocation>
        <location evidence="22">Cytoplasm</location>
    </subcellularLocation>
    <subcellularLocation>
        <location evidence="26">Lysosome</location>
    </subcellularLocation>
    <text evidence="3 7 8 10 13 14 22 25 26 27 28">Colocalizes with OPTN at the Golgi complex and in vesicular structures close to the plasma membrane (PubMed:15837803). In the GDP-bound form, present in the perinuclear region (PubMed:12221131). Shows a polarized distribution to distal regions of cell protrusions in the GTP-bound form (PubMed:12221131). Colocalizes with PARD3, PRKCI, EXOC5, OCLN, PODXL and RAB11A in apical membrane initiation sites (AMIS) during the generation of apical surface and lumenogenesis (PubMed:20890297). Localizes to tubular recycling endosome (PubMed:19864458). Recruited to phagosomes containing S.aureus or M.tuberculosis (PubMed:21255211). Non-phosphorylated RAB8A predominantly localized to the cytoplasm whereas phosphorylated RAB8A localized to the membrane (PubMed:26824392, PubMed:29125462, PubMed:30398148). Colocalized with MICAL1, GRAF1/ARHGAP26 and GRAF2/ARHGAP10 on endosomal tubules (PubMed:32344433). Localizes to enlarged lysosomes through LRRK2 phosphorylation (PubMed:30209220). Colocalizes with RPGR at the primary cilia of epithelial cells (By similarity).</text>
</comment>
<comment type="alternative products">
    <event type="alternative splicing"/>
    <isoform>
        <id>P61006-1</id>
        <name>1</name>
        <sequence type="displayed"/>
    </isoform>
    <isoform>
        <id>P61006-2</id>
        <name>2</name>
        <sequence type="described" ref="VSP_056399"/>
    </isoform>
</comment>
<comment type="domain">
    <text evidence="4">Switch 1, switch 2 and the interswitch regions are characteristic of Rab GTPases and mediate the interactions with Rab downstream effectors. The switch regions undergo conformational changes upon nucleotide binding which drives interaction with specific sets of effector proteins, with most effectors only binding to GTP-bound Rab.</text>
</comment>
<comment type="PTM">
    <text evidence="22 25 26">Phosphorylation of Thr-72 in the switch II region by LRRK2 prevents the association of RAB regulatory proteins, including CHM, CHML and RAB GDP dissociation inhibitors GDI1 and GDI2. Phosphorylation by LRRK2 is required for localization to stressed lysosomes.</text>
</comment>
<comment type="similarity">
    <text evidence="31">Belongs to the small GTPase superfamily. Rab family.</text>
</comment>
<dbReference type="EC" id="3.6.5.2" evidence="33"/>
<dbReference type="EMBL" id="X56741">
    <property type="protein sequence ID" value="CAA40065.1"/>
    <property type="molecule type" value="mRNA"/>
</dbReference>
<dbReference type="EMBL" id="S53268">
    <property type="protein sequence ID" value="AAB19681.1"/>
    <property type="molecule type" value="mRNA"/>
</dbReference>
<dbReference type="EMBL" id="AF498943">
    <property type="protein sequence ID" value="AAM21091.1"/>
    <property type="molecule type" value="mRNA"/>
</dbReference>
<dbReference type="EMBL" id="BT007184">
    <property type="protein sequence ID" value="AAP35848.1"/>
    <property type="molecule type" value="mRNA"/>
</dbReference>
<dbReference type="EMBL" id="AK293676">
    <property type="protein sequence ID" value="BAG57118.1"/>
    <property type="molecule type" value="mRNA"/>
</dbReference>
<dbReference type="EMBL" id="CR536583">
    <property type="protein sequence ID" value="CAG38820.1"/>
    <property type="molecule type" value="mRNA"/>
</dbReference>
<dbReference type="EMBL" id="AC008894">
    <property type="status" value="NOT_ANNOTATED_CDS"/>
    <property type="molecule type" value="Genomic_DNA"/>
</dbReference>
<dbReference type="EMBL" id="CR542274">
    <property type="protein sequence ID" value="CAG47070.1"/>
    <property type="molecule type" value="mRNA"/>
</dbReference>
<dbReference type="EMBL" id="CH471106">
    <property type="protein sequence ID" value="EAW84526.1"/>
    <property type="molecule type" value="Genomic_DNA"/>
</dbReference>
<dbReference type="EMBL" id="BC002977">
    <property type="protein sequence ID" value="AAH02977.1"/>
    <property type="molecule type" value="mRNA"/>
</dbReference>
<dbReference type="CCDS" id="CCDS12339.1">
    <molecule id="P61006-1"/>
</dbReference>
<dbReference type="PIR" id="B49647">
    <property type="entry name" value="B49647"/>
</dbReference>
<dbReference type="RefSeq" id="NP_005361.2">
    <molecule id="P61006-1"/>
    <property type="nucleotide sequence ID" value="NM_005370.4"/>
</dbReference>
<dbReference type="PDB" id="3QBT">
    <property type="method" value="X-ray"/>
    <property type="resolution" value="2.00 A"/>
    <property type="chains" value="A/C/E/G=6-176"/>
</dbReference>
<dbReference type="PDB" id="3TNF">
    <property type="method" value="X-ray"/>
    <property type="resolution" value="2.50 A"/>
    <property type="chains" value="A=6-176"/>
</dbReference>
<dbReference type="PDB" id="4LHV">
    <property type="method" value="X-ray"/>
    <property type="resolution" value="1.95 A"/>
    <property type="chains" value="A/B/C/D/E=6-176"/>
</dbReference>
<dbReference type="PDB" id="4LHW">
    <property type="method" value="X-ray"/>
    <property type="resolution" value="1.55 A"/>
    <property type="chains" value="A/B/C/D/E=6-176"/>
</dbReference>
<dbReference type="PDB" id="4LHX">
    <property type="method" value="X-ray"/>
    <property type="resolution" value="3.05 A"/>
    <property type="chains" value="A/B=1-184"/>
</dbReference>
<dbReference type="PDB" id="4LHY">
    <property type="method" value="X-ray"/>
    <property type="resolution" value="3.10 A"/>
    <property type="chains" value="A/B=1-184"/>
</dbReference>
<dbReference type="PDB" id="4LHZ">
    <property type="method" value="X-ray"/>
    <property type="resolution" value="3.20 A"/>
    <property type="chains" value="A/B=1-184"/>
</dbReference>
<dbReference type="PDB" id="4LI0">
    <property type="method" value="X-ray"/>
    <property type="resolution" value="3.30 A"/>
    <property type="chains" value="A/B=1-184"/>
</dbReference>
<dbReference type="PDB" id="5SZI">
    <property type="method" value="X-ray"/>
    <property type="resolution" value="2.85 A"/>
    <property type="chains" value="A=1-207"/>
</dbReference>
<dbReference type="PDB" id="6RIR">
    <property type="method" value="X-ray"/>
    <property type="resolution" value="1.77 A"/>
    <property type="chains" value="A/B=1-181"/>
</dbReference>
<dbReference type="PDB" id="6SQ2">
    <property type="method" value="X-ray"/>
    <property type="resolution" value="1.68 A"/>
    <property type="chains" value="A/B=1-181"/>
</dbReference>
<dbReference type="PDB" id="6STF">
    <property type="method" value="X-ray"/>
    <property type="resolution" value="2.40 A"/>
    <property type="chains" value="A/B/C/D/E=5-176"/>
</dbReference>
<dbReference type="PDB" id="6STG">
    <property type="method" value="X-ray"/>
    <property type="resolution" value="2.50 A"/>
    <property type="chains" value="A/B=5-176"/>
</dbReference>
<dbReference type="PDB" id="6WHE">
    <property type="method" value="X-ray"/>
    <property type="resolution" value="1.73 A"/>
    <property type="chains" value="A/B=1-181"/>
</dbReference>
<dbReference type="PDB" id="6YX5">
    <property type="method" value="X-ray"/>
    <property type="resolution" value="2.14 A"/>
    <property type="chains" value="A=6-176"/>
</dbReference>
<dbReference type="PDB" id="6ZSI">
    <property type="method" value="X-ray"/>
    <property type="resolution" value="1.91 A"/>
    <property type="chains" value="A/B=1-176"/>
</dbReference>
<dbReference type="PDB" id="6ZSJ">
    <property type="method" value="X-ray"/>
    <property type="resolution" value="2.00 A"/>
    <property type="chains" value="A/B=1-176"/>
</dbReference>
<dbReference type="PDB" id="7BWT">
    <property type="method" value="X-ray"/>
    <property type="resolution" value="2.30 A"/>
    <property type="chains" value="B=2-183"/>
</dbReference>
<dbReference type="PDB" id="7LWB">
    <property type="method" value="X-ray"/>
    <property type="resolution" value="1.90 A"/>
    <property type="chains" value="A=1-181"/>
</dbReference>
<dbReference type="PDB" id="9IKQ">
    <property type="method" value="X-ray"/>
    <property type="resolution" value="1.93 A"/>
    <property type="chains" value="A/B=1-181"/>
</dbReference>
<dbReference type="PDBsum" id="3QBT"/>
<dbReference type="PDBsum" id="3TNF"/>
<dbReference type="PDBsum" id="4LHV"/>
<dbReference type="PDBsum" id="4LHW"/>
<dbReference type="PDBsum" id="4LHX"/>
<dbReference type="PDBsum" id="4LHY"/>
<dbReference type="PDBsum" id="4LHZ"/>
<dbReference type="PDBsum" id="4LI0"/>
<dbReference type="PDBsum" id="5SZI"/>
<dbReference type="PDBsum" id="6RIR"/>
<dbReference type="PDBsum" id="6SQ2"/>
<dbReference type="PDBsum" id="6STF"/>
<dbReference type="PDBsum" id="6STG"/>
<dbReference type="PDBsum" id="6WHE"/>
<dbReference type="PDBsum" id="6YX5"/>
<dbReference type="PDBsum" id="6ZSI"/>
<dbReference type="PDBsum" id="6ZSJ"/>
<dbReference type="PDBsum" id="7BWT"/>
<dbReference type="PDBsum" id="7LWB"/>
<dbReference type="PDBsum" id="9IKQ"/>
<dbReference type="SMR" id="P61006"/>
<dbReference type="BioGRID" id="110382">
    <property type="interactions" value="214"/>
</dbReference>
<dbReference type="CORUM" id="P61006"/>
<dbReference type="DIP" id="DIP-43703N"/>
<dbReference type="FunCoup" id="P61006">
    <property type="interactions" value="2990"/>
</dbReference>
<dbReference type="IntAct" id="P61006">
    <property type="interactions" value="117"/>
</dbReference>
<dbReference type="MINT" id="P61006"/>
<dbReference type="STRING" id="9606.ENSP00000300935"/>
<dbReference type="GlyGen" id="P61006">
    <property type="glycosylation" value="1 site, 1 O-linked glycan (1 site)"/>
</dbReference>
<dbReference type="iPTMnet" id="P61006"/>
<dbReference type="PhosphoSitePlus" id="P61006"/>
<dbReference type="SwissPalm" id="P61006"/>
<dbReference type="BioMuta" id="RAB8A"/>
<dbReference type="DMDM" id="46810392"/>
<dbReference type="jPOST" id="P61006"/>
<dbReference type="MassIVE" id="P61006"/>
<dbReference type="PaxDb" id="9606-ENSP00000300935"/>
<dbReference type="PeptideAtlas" id="P61006"/>
<dbReference type="ProteomicsDB" id="57245">
    <molecule id="P61006-1"/>
</dbReference>
<dbReference type="Pumba" id="P61006"/>
<dbReference type="Antibodypedia" id="27297">
    <property type="antibodies" value="292 antibodies from 36 providers"/>
</dbReference>
<dbReference type="DNASU" id="4218"/>
<dbReference type="Ensembl" id="ENST00000300935.8">
    <molecule id="P61006-1"/>
    <property type="protein sequence ID" value="ENSP00000300935.2"/>
    <property type="gene ID" value="ENSG00000167461.12"/>
</dbReference>
<dbReference type="Ensembl" id="ENST00000586682.1">
    <molecule id="P61006-2"/>
    <property type="protein sequence ID" value="ENSP00000467501.1"/>
    <property type="gene ID" value="ENSG00000167461.12"/>
</dbReference>
<dbReference type="GeneID" id="4218"/>
<dbReference type="KEGG" id="hsa:4218"/>
<dbReference type="MANE-Select" id="ENST00000300935.8">
    <property type="protein sequence ID" value="ENSP00000300935.2"/>
    <property type="RefSeq nucleotide sequence ID" value="NM_005370.5"/>
    <property type="RefSeq protein sequence ID" value="NP_005361.2"/>
</dbReference>
<dbReference type="UCSC" id="uc002ndn.5">
    <molecule id="P61006-1"/>
    <property type="organism name" value="human"/>
</dbReference>
<dbReference type="AGR" id="HGNC:7007"/>
<dbReference type="CTD" id="4218"/>
<dbReference type="DisGeNET" id="4218"/>
<dbReference type="GeneCards" id="RAB8A"/>
<dbReference type="HGNC" id="HGNC:7007">
    <property type="gene designation" value="RAB8A"/>
</dbReference>
<dbReference type="HPA" id="ENSG00000167461">
    <property type="expression patterns" value="Low tissue specificity"/>
</dbReference>
<dbReference type="MIM" id="165040">
    <property type="type" value="gene"/>
</dbReference>
<dbReference type="neXtProt" id="NX_P61006"/>
<dbReference type="OpenTargets" id="ENSG00000167461"/>
<dbReference type="PharmGKB" id="PA30743"/>
<dbReference type="VEuPathDB" id="HostDB:ENSG00000167461"/>
<dbReference type="eggNOG" id="KOG0078">
    <property type="taxonomic scope" value="Eukaryota"/>
</dbReference>
<dbReference type="GeneTree" id="ENSGT00940000157246"/>
<dbReference type="HOGENOM" id="CLU_041217_23_1_1"/>
<dbReference type="InParanoid" id="P61006"/>
<dbReference type="OMA" id="SKMEQNE"/>
<dbReference type="OrthoDB" id="9989112at2759"/>
<dbReference type="PAN-GO" id="P61006">
    <property type="GO annotations" value="14 GO annotations based on evolutionary models"/>
</dbReference>
<dbReference type="PhylomeDB" id="P61006"/>
<dbReference type="TreeFam" id="TF314097"/>
<dbReference type="BRENDA" id="3.6.5.2">
    <property type="organism ID" value="2681"/>
</dbReference>
<dbReference type="PathwayCommons" id="P61006"/>
<dbReference type="Reactome" id="R-HSA-1445148">
    <property type="pathway name" value="Translocation of SLC2A4 (GLUT4) to the plasma membrane"/>
</dbReference>
<dbReference type="Reactome" id="R-HSA-2565942">
    <property type="pathway name" value="Regulation of PLK1 Activity at G2/M Transition"/>
</dbReference>
<dbReference type="Reactome" id="R-HSA-5620912">
    <property type="pathway name" value="Anchoring of the basal body to the plasma membrane"/>
</dbReference>
<dbReference type="Reactome" id="R-HSA-5620916">
    <property type="pathway name" value="VxPx cargo-targeting to cilium"/>
</dbReference>
<dbReference type="Reactome" id="R-HSA-8854214">
    <property type="pathway name" value="TBC/RABGAPs"/>
</dbReference>
<dbReference type="Reactome" id="R-HSA-8873719">
    <property type="pathway name" value="RAB geranylgeranylation"/>
</dbReference>
<dbReference type="Reactome" id="R-HSA-8876198">
    <property type="pathway name" value="RAB GEFs exchange GTP for GDP on RABs"/>
</dbReference>
<dbReference type="SignaLink" id="P61006"/>
<dbReference type="SIGNOR" id="P61006"/>
<dbReference type="BioGRID-ORCS" id="4218">
    <property type="hits" value="17 hits in 1166 CRISPR screens"/>
</dbReference>
<dbReference type="ChiTaRS" id="RAB8A">
    <property type="organism name" value="human"/>
</dbReference>
<dbReference type="EvolutionaryTrace" id="P61006"/>
<dbReference type="GeneWiki" id="RAB8A"/>
<dbReference type="GenomeRNAi" id="4218"/>
<dbReference type="Pharos" id="P61006">
    <property type="development level" value="Tbio"/>
</dbReference>
<dbReference type="PRO" id="PR:P61006"/>
<dbReference type="Proteomes" id="UP000005640">
    <property type="component" value="Chromosome 19"/>
</dbReference>
<dbReference type="RNAct" id="P61006">
    <property type="molecule type" value="protein"/>
</dbReference>
<dbReference type="Bgee" id="ENSG00000167461">
    <property type="expression patterns" value="Expressed in monocyte and 212 other cell types or tissues"/>
</dbReference>
<dbReference type="ExpressionAtlas" id="P61006">
    <property type="expression patterns" value="baseline and differential"/>
</dbReference>
<dbReference type="GO" id="GO:0015629">
    <property type="term" value="C:actin cytoskeleton"/>
    <property type="evidence" value="ECO:0000314"/>
    <property type="project" value="HPA"/>
</dbReference>
<dbReference type="GO" id="GO:0034451">
    <property type="term" value="C:centriolar satellite"/>
    <property type="evidence" value="ECO:0000314"/>
    <property type="project" value="HPA"/>
</dbReference>
<dbReference type="GO" id="GO:0005814">
    <property type="term" value="C:centriole"/>
    <property type="evidence" value="ECO:0007669"/>
    <property type="project" value="UniProtKB-SubCell"/>
</dbReference>
<dbReference type="GO" id="GO:0005813">
    <property type="term" value="C:centrosome"/>
    <property type="evidence" value="ECO:0000314"/>
    <property type="project" value="UniProtKB"/>
</dbReference>
<dbReference type="GO" id="GO:0036064">
    <property type="term" value="C:ciliary basal body"/>
    <property type="evidence" value="ECO:0000314"/>
    <property type="project" value="HPA"/>
</dbReference>
<dbReference type="GO" id="GO:0097546">
    <property type="term" value="C:ciliary base"/>
    <property type="evidence" value="ECO:0007669"/>
    <property type="project" value="Ensembl"/>
</dbReference>
<dbReference type="GO" id="GO:0060170">
    <property type="term" value="C:ciliary membrane"/>
    <property type="evidence" value="ECO:0007669"/>
    <property type="project" value="Ensembl"/>
</dbReference>
<dbReference type="GO" id="GO:0005929">
    <property type="term" value="C:cilium"/>
    <property type="evidence" value="ECO:0000314"/>
    <property type="project" value="HPA"/>
</dbReference>
<dbReference type="GO" id="GO:0005829">
    <property type="term" value="C:cytosol"/>
    <property type="evidence" value="ECO:0000314"/>
    <property type="project" value="HPA"/>
</dbReference>
<dbReference type="GO" id="GO:0030425">
    <property type="term" value="C:dendrite"/>
    <property type="evidence" value="ECO:0007669"/>
    <property type="project" value="Ensembl"/>
</dbReference>
<dbReference type="GO" id="GO:0005768">
    <property type="term" value="C:endosome"/>
    <property type="evidence" value="ECO:0000318"/>
    <property type="project" value="GO_Central"/>
</dbReference>
<dbReference type="GO" id="GO:0010008">
    <property type="term" value="C:endosome membrane"/>
    <property type="evidence" value="ECO:0000314"/>
    <property type="project" value="UniProtKB"/>
</dbReference>
<dbReference type="GO" id="GO:0070062">
    <property type="term" value="C:extracellular exosome"/>
    <property type="evidence" value="ECO:0007005"/>
    <property type="project" value="UniProtKB"/>
</dbReference>
<dbReference type="GO" id="GO:0098978">
    <property type="term" value="C:glutamatergic synapse"/>
    <property type="evidence" value="ECO:0007669"/>
    <property type="project" value="Ensembl"/>
</dbReference>
<dbReference type="GO" id="GO:0005794">
    <property type="term" value="C:Golgi apparatus"/>
    <property type="evidence" value="ECO:0000314"/>
    <property type="project" value="HPA"/>
</dbReference>
<dbReference type="GO" id="GO:0000139">
    <property type="term" value="C:Golgi membrane"/>
    <property type="evidence" value="ECO:0000304"/>
    <property type="project" value="Reactome"/>
</dbReference>
<dbReference type="GO" id="GO:0005764">
    <property type="term" value="C:lysosome"/>
    <property type="evidence" value="ECO:0007669"/>
    <property type="project" value="UniProtKB-SubCell"/>
</dbReference>
<dbReference type="GO" id="GO:0030496">
    <property type="term" value="C:midbody"/>
    <property type="evidence" value="ECO:0000314"/>
    <property type="project" value="UniProtKB"/>
</dbReference>
<dbReference type="GO" id="GO:0043025">
    <property type="term" value="C:neuronal cell body"/>
    <property type="evidence" value="ECO:0007669"/>
    <property type="project" value="Ensembl"/>
</dbReference>
<dbReference type="GO" id="GO:0097730">
    <property type="term" value="C:non-motile cilium"/>
    <property type="evidence" value="ECO:0000314"/>
    <property type="project" value="BHF-UCL"/>
</dbReference>
<dbReference type="GO" id="GO:0005730">
    <property type="term" value="C:nucleolus"/>
    <property type="evidence" value="ECO:0000314"/>
    <property type="project" value="HPA"/>
</dbReference>
<dbReference type="GO" id="GO:0005654">
    <property type="term" value="C:nucleoplasm"/>
    <property type="evidence" value="ECO:0000314"/>
    <property type="project" value="HPA"/>
</dbReference>
<dbReference type="GO" id="GO:0045335">
    <property type="term" value="C:phagocytic vesicle"/>
    <property type="evidence" value="ECO:0000314"/>
    <property type="project" value="UniProtKB"/>
</dbReference>
<dbReference type="GO" id="GO:0030670">
    <property type="term" value="C:phagocytic vesicle membrane"/>
    <property type="evidence" value="ECO:0007669"/>
    <property type="project" value="UniProtKB-SubCell"/>
</dbReference>
<dbReference type="GO" id="GO:0005886">
    <property type="term" value="C:plasma membrane"/>
    <property type="evidence" value="ECO:0000314"/>
    <property type="project" value="HPA"/>
</dbReference>
<dbReference type="GO" id="GO:0055038">
    <property type="term" value="C:recycling endosome membrane"/>
    <property type="evidence" value="ECO:0000314"/>
    <property type="project" value="UniProtKB"/>
</dbReference>
<dbReference type="GO" id="GO:0008021">
    <property type="term" value="C:synaptic vesicle"/>
    <property type="evidence" value="ECO:0000318"/>
    <property type="project" value="GO_Central"/>
</dbReference>
<dbReference type="GO" id="GO:0032588">
    <property type="term" value="C:trans-Golgi network membrane"/>
    <property type="evidence" value="ECO:0000304"/>
    <property type="project" value="Reactome"/>
</dbReference>
<dbReference type="GO" id="GO:0030140">
    <property type="term" value="C:trans-Golgi network transport vesicle"/>
    <property type="evidence" value="ECO:0000318"/>
    <property type="project" value="GO_Central"/>
</dbReference>
<dbReference type="GO" id="GO:0019003">
    <property type="term" value="F:GDP binding"/>
    <property type="evidence" value="ECO:0000314"/>
    <property type="project" value="UniProtKB"/>
</dbReference>
<dbReference type="GO" id="GO:0005525">
    <property type="term" value="F:GTP binding"/>
    <property type="evidence" value="ECO:0000314"/>
    <property type="project" value="UniProtKB"/>
</dbReference>
<dbReference type="GO" id="GO:0003924">
    <property type="term" value="F:GTPase activity"/>
    <property type="evidence" value="ECO:0000314"/>
    <property type="project" value="UniProtKB"/>
</dbReference>
<dbReference type="GO" id="GO:0031489">
    <property type="term" value="F:myosin V binding"/>
    <property type="evidence" value="ECO:0000353"/>
    <property type="project" value="UniProtKB"/>
</dbReference>
<dbReference type="GO" id="GO:1990782">
    <property type="term" value="F:protein tyrosine kinase binding"/>
    <property type="evidence" value="ECO:0007669"/>
    <property type="project" value="Ensembl"/>
</dbReference>
<dbReference type="GO" id="GO:0031267">
    <property type="term" value="F:small GTPase binding"/>
    <property type="evidence" value="ECO:0000250"/>
    <property type="project" value="UniProtKB"/>
</dbReference>
<dbReference type="GO" id="GO:0006914">
    <property type="term" value="P:autophagy"/>
    <property type="evidence" value="ECO:0007669"/>
    <property type="project" value="UniProtKB-KW"/>
</dbReference>
<dbReference type="GO" id="GO:0007409">
    <property type="term" value="P:axonogenesis"/>
    <property type="evidence" value="ECO:0000250"/>
    <property type="project" value="UniProtKB"/>
</dbReference>
<dbReference type="GO" id="GO:0032869">
    <property type="term" value="P:cellular response to insulin stimulus"/>
    <property type="evidence" value="ECO:0000250"/>
    <property type="project" value="UniProtKB"/>
</dbReference>
<dbReference type="GO" id="GO:0060271">
    <property type="term" value="P:cilium assembly"/>
    <property type="evidence" value="ECO:0000314"/>
    <property type="project" value="BHF-UCL"/>
</dbReference>
<dbReference type="GO" id="GO:0032456">
    <property type="term" value="P:endocytic recycling"/>
    <property type="evidence" value="ECO:0000318"/>
    <property type="project" value="GO_Central"/>
</dbReference>
<dbReference type="GO" id="GO:0006887">
    <property type="term" value="P:exocytosis"/>
    <property type="evidence" value="ECO:0000318"/>
    <property type="project" value="GO_Central"/>
</dbReference>
<dbReference type="GO" id="GO:0007030">
    <property type="term" value="P:Golgi organization"/>
    <property type="evidence" value="ECO:0000315"/>
    <property type="project" value="UniProtKB"/>
</dbReference>
<dbReference type="GO" id="GO:0048210">
    <property type="term" value="P:Golgi vesicle fusion to target membrane"/>
    <property type="evidence" value="ECO:0000314"/>
    <property type="project" value="BHF-UCL"/>
</dbReference>
<dbReference type="GO" id="GO:0098969">
    <property type="term" value="P:neurotransmitter receptor transport to postsynaptic membrane"/>
    <property type="evidence" value="ECO:0000318"/>
    <property type="project" value="GO_Central"/>
</dbReference>
<dbReference type="GO" id="GO:0098887">
    <property type="term" value="P:neurotransmitter receptor transport, endosome to postsynaptic membrane"/>
    <property type="evidence" value="ECO:0007669"/>
    <property type="project" value="Ensembl"/>
</dbReference>
<dbReference type="GO" id="GO:0061512">
    <property type="term" value="P:protein localization to cilium"/>
    <property type="evidence" value="ECO:0000250"/>
    <property type="project" value="UniProtKB"/>
</dbReference>
<dbReference type="GO" id="GO:0072659">
    <property type="term" value="P:protein localization to plasma membrane"/>
    <property type="evidence" value="ECO:0000250"/>
    <property type="project" value="UniProtKB"/>
</dbReference>
<dbReference type="GO" id="GO:0010506">
    <property type="term" value="P:regulation of autophagy"/>
    <property type="evidence" value="ECO:0000315"/>
    <property type="project" value="UniProtKB"/>
</dbReference>
<dbReference type="GO" id="GO:0048169">
    <property type="term" value="P:regulation of long-term neuronal synaptic plasticity"/>
    <property type="evidence" value="ECO:0007669"/>
    <property type="project" value="Ensembl"/>
</dbReference>
<dbReference type="GO" id="GO:0051223">
    <property type="term" value="P:regulation of protein transport"/>
    <property type="evidence" value="ECO:0007669"/>
    <property type="project" value="Ensembl"/>
</dbReference>
<dbReference type="GO" id="GO:0006904">
    <property type="term" value="P:vesicle docking involved in exocytosis"/>
    <property type="evidence" value="ECO:0000314"/>
    <property type="project" value="BHF-UCL"/>
</dbReference>
<dbReference type="GO" id="GO:0099003">
    <property type="term" value="P:vesicle-mediated transport in synapse"/>
    <property type="evidence" value="ECO:0007669"/>
    <property type="project" value="Ensembl"/>
</dbReference>
<dbReference type="CDD" id="cd01867">
    <property type="entry name" value="Rab8_Rab10_Rab13_like"/>
    <property type="match status" value="1"/>
</dbReference>
<dbReference type="FunFam" id="3.40.50.300:FF:000202">
    <property type="entry name" value="ras-related protein Rab-8A"/>
    <property type="match status" value="1"/>
</dbReference>
<dbReference type="Gene3D" id="3.40.50.300">
    <property type="entry name" value="P-loop containing nucleotide triphosphate hydrolases"/>
    <property type="match status" value="1"/>
</dbReference>
<dbReference type="InterPro" id="IPR027417">
    <property type="entry name" value="P-loop_NTPase"/>
</dbReference>
<dbReference type="InterPro" id="IPR005225">
    <property type="entry name" value="Small_GTP-bd"/>
</dbReference>
<dbReference type="InterPro" id="IPR001806">
    <property type="entry name" value="Small_GTPase"/>
</dbReference>
<dbReference type="InterPro" id="IPR050305">
    <property type="entry name" value="Small_GTPase_Rab"/>
</dbReference>
<dbReference type="NCBIfam" id="TIGR00231">
    <property type="entry name" value="small_GTP"/>
    <property type="match status" value="1"/>
</dbReference>
<dbReference type="PANTHER" id="PTHR47980">
    <property type="entry name" value="LD44762P"/>
    <property type="match status" value="1"/>
</dbReference>
<dbReference type="Pfam" id="PF00071">
    <property type="entry name" value="Ras"/>
    <property type="match status" value="1"/>
</dbReference>
<dbReference type="PRINTS" id="PR00449">
    <property type="entry name" value="RASTRNSFRMNG"/>
</dbReference>
<dbReference type="SMART" id="SM00177">
    <property type="entry name" value="ARF"/>
    <property type="match status" value="1"/>
</dbReference>
<dbReference type="SMART" id="SM00175">
    <property type="entry name" value="RAB"/>
    <property type="match status" value="1"/>
</dbReference>
<dbReference type="SMART" id="SM00176">
    <property type="entry name" value="RAN"/>
    <property type="match status" value="1"/>
</dbReference>
<dbReference type="SMART" id="SM00173">
    <property type="entry name" value="RAS"/>
    <property type="match status" value="1"/>
</dbReference>
<dbReference type="SMART" id="SM00174">
    <property type="entry name" value="RHO"/>
    <property type="match status" value="1"/>
</dbReference>
<dbReference type="SUPFAM" id="SSF52540">
    <property type="entry name" value="P-loop containing nucleoside triphosphate hydrolases"/>
    <property type="match status" value="1"/>
</dbReference>
<dbReference type="PROSITE" id="PS51419">
    <property type="entry name" value="RAB"/>
    <property type="match status" value="1"/>
</dbReference>
<protein>
    <recommendedName>
        <fullName>Ras-related protein Rab-8A</fullName>
        <ecNumber evidence="33">3.6.5.2</ecNumber>
    </recommendedName>
    <alternativeName>
        <fullName>Oncogene c-mel</fullName>
    </alternativeName>
</protein>
<keyword id="KW-0002">3D-structure</keyword>
<keyword id="KW-0025">Alternative splicing</keyword>
<keyword id="KW-0072">Autophagy</keyword>
<keyword id="KW-1003">Cell membrane</keyword>
<keyword id="KW-0966">Cell projection</keyword>
<keyword id="KW-0969">Cilium</keyword>
<keyword id="KW-0970">Cilium biogenesis/degradation</keyword>
<keyword id="KW-0963">Cytoplasm</keyword>
<keyword id="KW-0968">Cytoplasmic vesicle</keyword>
<keyword id="KW-0206">Cytoskeleton</keyword>
<keyword id="KW-0967">Endosome</keyword>
<keyword id="KW-0333">Golgi apparatus</keyword>
<keyword id="KW-0342">GTP-binding</keyword>
<keyword id="KW-0378">Hydrolase</keyword>
<keyword id="KW-0449">Lipoprotein</keyword>
<keyword id="KW-0458">Lysosome</keyword>
<keyword id="KW-0472">Membrane</keyword>
<keyword id="KW-0488">Methylation</keyword>
<keyword id="KW-0547">Nucleotide-binding</keyword>
<keyword id="KW-0597">Phosphoprotein</keyword>
<keyword id="KW-0636">Prenylation</keyword>
<keyword id="KW-0653">Protein transport</keyword>
<keyword id="KW-1267">Proteomics identification</keyword>
<keyword id="KW-0656">Proto-oncogene</keyword>
<keyword id="KW-1185">Reference proteome</keyword>
<keyword id="KW-0813">Transport</keyword>
<gene>
    <name evidence="36" type="primary">RAB8A</name>
    <name type="synonym">MEL</name>
    <name type="synonym">RAB8</name>
</gene>
<reference key="1">
    <citation type="journal article" date="1994" name="J. Cell Biol.">
        <title>A small rab GTPase is distributed in cytoplasmic vesicles in non polarized cells but colocalizes with the tight junction marker ZO-1 in polarized epithelial cells.</title>
        <authorList>
            <person name="Zahraoui A."/>
            <person name="Joberty G."/>
            <person name="Arpin M."/>
            <person name="Fontaine J.J."/>
            <person name="Hellio R."/>
            <person name="Tavitian A."/>
            <person name="Louvard D."/>
        </authorList>
    </citation>
    <scope>NUCLEOTIDE SEQUENCE [MRNA] (ISOFORM 1)</scope>
</reference>
<reference key="2">
    <citation type="journal article" date="1991" name="Oncogene">
        <title>The MEL gene: a new member of the RAB/YPT class of RAS-related genes.</title>
        <authorList>
            <person name="Nimmo E.R."/>
            <person name="Sanders P.G."/>
            <person name="Padua R.A."/>
            <person name="Hughes D."/>
            <person name="Williamson R."/>
            <person name="Johnson K.J."/>
        </authorList>
    </citation>
    <scope>NUCLEOTIDE SEQUENCE [MRNA] (ISOFORM 1)</scope>
</reference>
<reference key="3">
    <citation type="submission" date="2002-04" db="EMBL/GenBank/DDBJ databases">
        <title>cDNA clones of human proteins involved in signal transduction sequenced by the Guthrie cDNA resource center (www.cdna.org).</title>
        <authorList>
            <person name="Puhl H.L. III"/>
            <person name="Ikeda S.R."/>
            <person name="Aronstam R.S."/>
        </authorList>
    </citation>
    <scope>NUCLEOTIDE SEQUENCE [LARGE SCALE MRNA] (ISOFORM 1)</scope>
    <source>
        <tissue>Brain</tissue>
    </source>
</reference>
<reference key="4">
    <citation type="submission" date="2003-05" db="EMBL/GenBank/DDBJ databases">
        <title>Cloning of human full-length CDSs in BD Creator(TM) system donor vector.</title>
        <authorList>
            <person name="Kalnine N."/>
            <person name="Chen X."/>
            <person name="Rolfs A."/>
            <person name="Halleck A."/>
            <person name="Hines L."/>
            <person name="Eisenstein S."/>
            <person name="Koundinya M."/>
            <person name="Raphael J."/>
            <person name="Moreira D."/>
            <person name="Kelley T."/>
            <person name="LaBaer J."/>
            <person name="Lin Y."/>
            <person name="Phelan M."/>
            <person name="Farmer A."/>
        </authorList>
    </citation>
    <scope>NUCLEOTIDE SEQUENCE [LARGE SCALE MRNA] (ISOFORM 1)</scope>
</reference>
<reference key="5">
    <citation type="journal article" date="2004" name="Nat. Genet.">
        <title>Complete sequencing and characterization of 21,243 full-length human cDNAs.</title>
        <authorList>
            <person name="Ota T."/>
            <person name="Suzuki Y."/>
            <person name="Nishikawa T."/>
            <person name="Otsuki T."/>
            <person name="Sugiyama T."/>
            <person name="Irie R."/>
            <person name="Wakamatsu A."/>
            <person name="Hayashi K."/>
            <person name="Sato H."/>
            <person name="Nagai K."/>
            <person name="Kimura K."/>
            <person name="Makita H."/>
            <person name="Sekine M."/>
            <person name="Obayashi M."/>
            <person name="Nishi T."/>
            <person name="Shibahara T."/>
            <person name="Tanaka T."/>
            <person name="Ishii S."/>
            <person name="Yamamoto J."/>
            <person name="Saito K."/>
            <person name="Kawai Y."/>
            <person name="Isono Y."/>
            <person name="Nakamura Y."/>
            <person name="Nagahari K."/>
            <person name="Murakami K."/>
            <person name="Yasuda T."/>
            <person name="Iwayanagi T."/>
            <person name="Wagatsuma M."/>
            <person name="Shiratori A."/>
            <person name="Sudo H."/>
            <person name="Hosoiri T."/>
            <person name="Kaku Y."/>
            <person name="Kodaira H."/>
            <person name="Kondo H."/>
            <person name="Sugawara M."/>
            <person name="Takahashi M."/>
            <person name="Kanda K."/>
            <person name="Yokoi T."/>
            <person name="Furuya T."/>
            <person name="Kikkawa E."/>
            <person name="Omura Y."/>
            <person name="Abe K."/>
            <person name="Kamihara K."/>
            <person name="Katsuta N."/>
            <person name="Sato K."/>
            <person name="Tanikawa M."/>
            <person name="Yamazaki M."/>
            <person name="Ninomiya K."/>
            <person name="Ishibashi T."/>
            <person name="Yamashita H."/>
            <person name="Murakawa K."/>
            <person name="Fujimori K."/>
            <person name="Tanai H."/>
            <person name="Kimata M."/>
            <person name="Watanabe M."/>
            <person name="Hiraoka S."/>
            <person name="Chiba Y."/>
            <person name="Ishida S."/>
            <person name="Ono Y."/>
            <person name="Takiguchi S."/>
            <person name="Watanabe S."/>
            <person name="Yosida M."/>
            <person name="Hotuta T."/>
            <person name="Kusano J."/>
            <person name="Kanehori K."/>
            <person name="Takahashi-Fujii A."/>
            <person name="Hara H."/>
            <person name="Tanase T.-O."/>
            <person name="Nomura Y."/>
            <person name="Togiya S."/>
            <person name="Komai F."/>
            <person name="Hara R."/>
            <person name="Takeuchi K."/>
            <person name="Arita M."/>
            <person name="Imose N."/>
            <person name="Musashino K."/>
            <person name="Yuuki H."/>
            <person name="Oshima A."/>
            <person name="Sasaki N."/>
            <person name="Aotsuka S."/>
            <person name="Yoshikawa Y."/>
            <person name="Matsunawa H."/>
            <person name="Ichihara T."/>
            <person name="Shiohata N."/>
            <person name="Sano S."/>
            <person name="Moriya S."/>
            <person name="Momiyama H."/>
            <person name="Satoh N."/>
            <person name="Takami S."/>
            <person name="Terashima Y."/>
            <person name="Suzuki O."/>
            <person name="Nakagawa S."/>
            <person name="Senoh A."/>
            <person name="Mizoguchi H."/>
            <person name="Goto Y."/>
            <person name="Shimizu F."/>
            <person name="Wakebe H."/>
            <person name="Hishigaki H."/>
            <person name="Watanabe T."/>
            <person name="Sugiyama A."/>
            <person name="Takemoto M."/>
            <person name="Kawakami B."/>
            <person name="Yamazaki M."/>
            <person name="Watanabe K."/>
            <person name="Kumagai A."/>
            <person name="Itakura S."/>
            <person name="Fukuzumi Y."/>
            <person name="Fujimori Y."/>
            <person name="Komiyama M."/>
            <person name="Tashiro H."/>
            <person name="Tanigami A."/>
            <person name="Fujiwara T."/>
            <person name="Ono T."/>
            <person name="Yamada K."/>
            <person name="Fujii Y."/>
            <person name="Ozaki K."/>
            <person name="Hirao M."/>
            <person name="Ohmori Y."/>
            <person name="Kawabata A."/>
            <person name="Hikiji T."/>
            <person name="Kobatake N."/>
            <person name="Inagaki H."/>
            <person name="Ikema Y."/>
            <person name="Okamoto S."/>
            <person name="Okitani R."/>
            <person name="Kawakami T."/>
            <person name="Noguchi S."/>
            <person name="Itoh T."/>
            <person name="Shigeta K."/>
            <person name="Senba T."/>
            <person name="Matsumura K."/>
            <person name="Nakajima Y."/>
            <person name="Mizuno T."/>
            <person name="Morinaga M."/>
            <person name="Sasaki M."/>
            <person name="Togashi T."/>
            <person name="Oyama M."/>
            <person name="Hata H."/>
            <person name="Watanabe M."/>
            <person name="Komatsu T."/>
            <person name="Mizushima-Sugano J."/>
            <person name="Satoh T."/>
            <person name="Shirai Y."/>
            <person name="Takahashi Y."/>
            <person name="Nakagawa K."/>
            <person name="Okumura K."/>
            <person name="Nagase T."/>
            <person name="Nomura N."/>
            <person name="Kikuchi H."/>
            <person name="Masuho Y."/>
            <person name="Yamashita R."/>
            <person name="Nakai K."/>
            <person name="Yada T."/>
            <person name="Nakamura Y."/>
            <person name="Ohara O."/>
            <person name="Isogai T."/>
            <person name="Sugano S."/>
        </authorList>
    </citation>
    <scope>NUCLEOTIDE SEQUENCE [LARGE SCALE MRNA] (ISOFORM 2)</scope>
    <source>
        <tissue>Cerebellum</tissue>
    </source>
</reference>
<reference key="6">
    <citation type="submission" date="2004-06" db="EMBL/GenBank/DDBJ databases">
        <title>Cloning of human full open reading frames in Gateway(TM) system entry vector (pDONR201).</title>
        <authorList>
            <person name="Ebert L."/>
            <person name="Schick M."/>
            <person name="Neubert P."/>
            <person name="Schatten R."/>
            <person name="Henze S."/>
            <person name="Korn B."/>
        </authorList>
    </citation>
    <scope>NUCLEOTIDE SEQUENCE [LARGE SCALE MRNA] (ISOFORM 1)</scope>
</reference>
<reference key="7">
    <citation type="journal article" date="2004" name="Nature">
        <title>The DNA sequence and biology of human chromosome 19.</title>
        <authorList>
            <person name="Grimwood J."/>
            <person name="Gordon L.A."/>
            <person name="Olsen A.S."/>
            <person name="Terry A."/>
            <person name="Schmutz J."/>
            <person name="Lamerdin J.E."/>
            <person name="Hellsten U."/>
            <person name="Goodstein D."/>
            <person name="Couronne O."/>
            <person name="Tran-Gyamfi M."/>
            <person name="Aerts A."/>
            <person name="Altherr M."/>
            <person name="Ashworth L."/>
            <person name="Bajorek E."/>
            <person name="Black S."/>
            <person name="Branscomb E."/>
            <person name="Caenepeel S."/>
            <person name="Carrano A.V."/>
            <person name="Caoile C."/>
            <person name="Chan Y.M."/>
            <person name="Christensen M."/>
            <person name="Cleland C.A."/>
            <person name="Copeland A."/>
            <person name="Dalin E."/>
            <person name="Dehal P."/>
            <person name="Denys M."/>
            <person name="Detter J.C."/>
            <person name="Escobar J."/>
            <person name="Flowers D."/>
            <person name="Fotopulos D."/>
            <person name="Garcia C."/>
            <person name="Georgescu A.M."/>
            <person name="Glavina T."/>
            <person name="Gomez M."/>
            <person name="Gonzales E."/>
            <person name="Groza M."/>
            <person name="Hammon N."/>
            <person name="Hawkins T."/>
            <person name="Haydu L."/>
            <person name="Ho I."/>
            <person name="Huang W."/>
            <person name="Israni S."/>
            <person name="Jett J."/>
            <person name="Kadner K."/>
            <person name="Kimball H."/>
            <person name="Kobayashi A."/>
            <person name="Larionov V."/>
            <person name="Leem S.-H."/>
            <person name="Lopez F."/>
            <person name="Lou Y."/>
            <person name="Lowry S."/>
            <person name="Malfatti S."/>
            <person name="Martinez D."/>
            <person name="McCready P.M."/>
            <person name="Medina C."/>
            <person name="Morgan J."/>
            <person name="Nelson K."/>
            <person name="Nolan M."/>
            <person name="Ovcharenko I."/>
            <person name="Pitluck S."/>
            <person name="Pollard M."/>
            <person name="Popkie A.P."/>
            <person name="Predki P."/>
            <person name="Quan G."/>
            <person name="Ramirez L."/>
            <person name="Rash S."/>
            <person name="Retterer J."/>
            <person name="Rodriguez A."/>
            <person name="Rogers S."/>
            <person name="Salamov A."/>
            <person name="Salazar A."/>
            <person name="She X."/>
            <person name="Smith D."/>
            <person name="Slezak T."/>
            <person name="Solovyev V."/>
            <person name="Thayer N."/>
            <person name="Tice H."/>
            <person name="Tsai M."/>
            <person name="Ustaszewska A."/>
            <person name="Vo N."/>
            <person name="Wagner M."/>
            <person name="Wheeler J."/>
            <person name="Wu K."/>
            <person name="Xie G."/>
            <person name="Yang J."/>
            <person name="Dubchak I."/>
            <person name="Furey T.S."/>
            <person name="DeJong P."/>
            <person name="Dickson M."/>
            <person name="Gordon D."/>
            <person name="Eichler E.E."/>
            <person name="Pennacchio L.A."/>
            <person name="Richardson P."/>
            <person name="Stubbs L."/>
            <person name="Rokhsar D.S."/>
            <person name="Myers R.M."/>
            <person name="Rubin E.M."/>
            <person name="Lucas S.M."/>
        </authorList>
    </citation>
    <scope>NUCLEOTIDE SEQUENCE [LARGE SCALE GENOMIC DNA]</scope>
</reference>
<reference key="8">
    <citation type="submission" date="2005-07" db="EMBL/GenBank/DDBJ databases">
        <authorList>
            <person name="Mural R.J."/>
            <person name="Istrail S."/>
            <person name="Sutton G.G."/>
            <person name="Florea L."/>
            <person name="Halpern A.L."/>
            <person name="Mobarry C.M."/>
            <person name="Lippert R."/>
            <person name="Walenz B."/>
            <person name="Shatkay H."/>
            <person name="Dew I."/>
            <person name="Miller J.R."/>
            <person name="Flanigan M.J."/>
            <person name="Edwards N.J."/>
            <person name="Bolanos R."/>
            <person name="Fasulo D."/>
            <person name="Halldorsson B.V."/>
            <person name="Hannenhalli S."/>
            <person name="Turner R."/>
            <person name="Yooseph S."/>
            <person name="Lu F."/>
            <person name="Nusskern D.R."/>
            <person name="Shue B.C."/>
            <person name="Zheng X.H."/>
            <person name="Zhong F."/>
            <person name="Delcher A.L."/>
            <person name="Huson D.H."/>
            <person name="Kravitz S.A."/>
            <person name="Mouchard L."/>
            <person name="Reinert K."/>
            <person name="Remington K.A."/>
            <person name="Clark A.G."/>
            <person name="Waterman M.S."/>
            <person name="Eichler E.E."/>
            <person name="Adams M.D."/>
            <person name="Hunkapiller M.W."/>
            <person name="Myers E.W."/>
            <person name="Venter J.C."/>
        </authorList>
    </citation>
    <scope>NUCLEOTIDE SEQUENCE [LARGE SCALE GENOMIC DNA]</scope>
</reference>
<reference key="9">
    <citation type="journal article" date="2004" name="Genome Res.">
        <title>The status, quality, and expansion of the NIH full-length cDNA project: the Mammalian Gene Collection (MGC).</title>
        <authorList>
            <consortium name="The MGC Project Team"/>
        </authorList>
    </citation>
    <scope>NUCLEOTIDE SEQUENCE [LARGE SCALE MRNA] (ISOFORM 1)</scope>
    <source>
        <tissue>Skin</tissue>
    </source>
</reference>
<reference key="10">
    <citation type="journal article" date="1993" name="FEBS Lett.">
        <title>Isoprenylation of Rab proteins possessing a C-terminal CaaX motif.</title>
        <authorList>
            <person name="Joberty G."/>
            <person name="Tavitian A."/>
            <person name="Zahraoui A."/>
        </authorList>
    </citation>
    <scope>ISOPRENYLATION AT CYS-204</scope>
</reference>
<reference key="11">
    <citation type="journal article" date="2002" name="Mol. Biol. Cell">
        <title>A Rab8-specific GDP/GTP exchange factor is involved in actin remodeling and polarized membrane transport.</title>
        <authorList>
            <person name="Hattula K."/>
            <person name="Furuhjelm J."/>
            <person name="Arffman A."/>
            <person name="Peranen J."/>
        </authorList>
    </citation>
    <scope>INTERACTION WITH RAB3IP</scope>
    <scope>SUBCELLULAR LOCATION</scope>
    <scope>ACTIVITY REGULATION</scope>
    <source>
        <tissue>Brain</tissue>
    </source>
</reference>
<reference key="12">
    <citation type="journal article" date="2005" name="J. Cell Biol.">
        <title>Optineurin links myosin VI to the Golgi complex and is involved in Golgi organization and exocytosis.</title>
        <authorList>
            <person name="Sahlender D.A."/>
            <person name="Roberts R.C."/>
            <person name="Arden S.D."/>
            <person name="Spudich G."/>
            <person name="Taylor M.J."/>
            <person name="Luzio J.P."/>
            <person name="Kendrick-Jones J."/>
            <person name="Buss F."/>
        </authorList>
    </citation>
    <scope>SUBCELLULAR LOCATION</scope>
    <scope>INTERACTION WITH OPTN</scope>
</reference>
<reference key="13">
    <citation type="journal article" date="2006" name="Cell">
        <title>Global, in vivo, and site-specific phosphorylation dynamics in signaling networks.</title>
        <authorList>
            <person name="Olsen J.V."/>
            <person name="Blagoev B."/>
            <person name="Gnad F."/>
            <person name="Macek B."/>
            <person name="Kumar C."/>
            <person name="Mortensen P."/>
            <person name="Mann M."/>
        </authorList>
    </citation>
    <scope>PHOSPHORYLATION [LARGE SCALE ANALYSIS] AT SER-185</scope>
    <scope>IDENTIFICATION BY MASS SPECTROMETRY [LARGE SCALE ANALYSIS]</scope>
    <source>
        <tissue>Cervix carcinoma</tissue>
    </source>
</reference>
<reference key="14">
    <citation type="journal article" date="2008" name="Cell">
        <title>Final stages of cytokinesis and midbody ring formation are controlled by BRUCE.</title>
        <authorList>
            <person name="Pohl C."/>
            <person name="Jentsch S."/>
        </authorList>
    </citation>
    <scope>INTERACTION WITH BIRC6/BRUCE</scope>
</reference>
<reference key="15">
    <citation type="journal article" date="2008" name="Proc. Natl. Acad. Sci. U.S.A.">
        <title>A quantitative atlas of mitotic phosphorylation.</title>
        <authorList>
            <person name="Dephoure N."/>
            <person name="Zhou C."/>
            <person name="Villen J."/>
            <person name="Beausoleil S.A."/>
            <person name="Bakalarski C.E."/>
            <person name="Elledge S.J."/>
            <person name="Gygi S.P."/>
        </authorList>
    </citation>
    <scope>IDENTIFICATION BY MASS SPECTROMETRY [LARGE SCALE ANALYSIS]</scope>
    <source>
        <tissue>Cervix carcinoma</tissue>
    </source>
</reference>
<reference key="16">
    <citation type="journal article" date="2009" name="Anal. Chem.">
        <title>Lys-N and trypsin cover complementary parts of the phosphoproteome in a refined SCX-based approach.</title>
        <authorList>
            <person name="Gauci S."/>
            <person name="Helbig A.O."/>
            <person name="Slijper M."/>
            <person name="Krijgsveld J."/>
            <person name="Heck A.J."/>
            <person name="Mohammed S."/>
        </authorList>
    </citation>
    <scope>IDENTIFICATION BY MASS SPECTROMETRY [LARGE SCALE ANALYSIS]</scope>
</reference>
<reference key="17">
    <citation type="journal article" date="2010" name="Dev. Cell">
        <title>Pitchfork regulates primary cilia disassembly and left-right asymmetry.</title>
        <authorList>
            <person name="Kinzel D."/>
            <person name="Boldt K."/>
            <person name="Davis E.E."/>
            <person name="Burtscher I."/>
            <person name="Trumbach D."/>
            <person name="Diplas B."/>
            <person name="Attie-Bitach T."/>
            <person name="Wurst W."/>
            <person name="Katsanis N."/>
            <person name="Ueffing M."/>
            <person name="Lickert H."/>
        </authorList>
    </citation>
    <scope>INTERACTION WITH CIMAP3</scope>
</reference>
<reference key="18">
    <citation type="journal article" date="2010" name="Nat. Cell Biol.">
        <title>A molecular network for de novo generation of the apical surface and lumen.</title>
        <authorList>
            <person name="Bryant D.M."/>
            <person name="Datta A."/>
            <person name="Rodriguez-Fraticelli A.E."/>
            <person name="Peraenen J."/>
            <person name="Martin-Belmonte F."/>
            <person name="Mostov K.E."/>
        </authorList>
    </citation>
    <scope>FUNCTION</scope>
    <scope>SUBCELLULAR LOCATION</scope>
</reference>
<reference key="19">
    <citation type="journal article" date="2009" name="Mol. Biol. Cell">
        <title>MICAL-L1 links EHD1 to tubular recycling endosomes and regulates receptor recycling.</title>
        <authorList>
            <person name="Sharma M."/>
            <person name="Giridharan S.S."/>
            <person name="Rahajeng J."/>
            <person name="Naslavsky N."/>
            <person name="Caplan S."/>
        </authorList>
    </citation>
    <scope>SUBCELLULAR LOCATION</scope>
    <scope>INTERACTION WITH EHD1 AND MICALL1</scope>
    <scope>MUTAGENESIS OF THR-22 AND GLN-67</scope>
    <scope>CATALYTIC ACTIVITY</scope>
</reference>
<reference key="20">
    <citation type="journal article" date="2010" name="Sci. Signal.">
        <title>Quantitative phosphoproteomics reveals widespread full phosphorylation site occupancy during mitosis.</title>
        <authorList>
            <person name="Olsen J.V."/>
            <person name="Vermeulen M."/>
            <person name="Santamaria A."/>
            <person name="Kumar C."/>
            <person name="Miller M.L."/>
            <person name="Jensen L.J."/>
            <person name="Gnad F."/>
            <person name="Cox J."/>
            <person name="Jensen T.S."/>
            <person name="Nigg E.A."/>
            <person name="Brunak S."/>
            <person name="Mann M."/>
        </authorList>
    </citation>
    <scope>PHOSPHORYLATION [LARGE SCALE ANALYSIS] AT SER-181 AND SER-185</scope>
    <scope>IDENTIFICATION BY MASS SPECTROMETRY [LARGE SCALE ANALYSIS]</scope>
    <source>
        <tissue>Cervix carcinoma</tissue>
    </source>
</reference>
<reference key="21">
    <citation type="journal article" date="2011" name="BMC Syst. Biol.">
        <title>Initial characterization of the human central proteome.</title>
        <authorList>
            <person name="Burkard T.R."/>
            <person name="Planyavsky M."/>
            <person name="Kaupe I."/>
            <person name="Breitwieser F.P."/>
            <person name="Buerckstuemmer T."/>
            <person name="Bennett K.L."/>
            <person name="Superti-Furga G."/>
            <person name="Colinge J."/>
        </authorList>
    </citation>
    <scope>IDENTIFICATION BY MASS SPECTROMETRY [LARGE SCALE ANALYSIS]</scope>
</reference>
<reference key="22">
    <citation type="journal article" date="2011" name="J. Cell Sci.">
        <title>Linking cytoplasmic dynein and transport of Rab8 vesicles to the midbody during cytokinesis by the doublecortin domain-containing 5 protein.</title>
        <authorList>
            <person name="Kaplan A."/>
            <person name="Reiner O."/>
        </authorList>
    </citation>
    <scope>INTERACTION WITH DCDC1</scope>
    <scope>SUBCELLULAR LOCATION</scope>
</reference>
<reference key="23">
    <citation type="journal article" date="2011" name="Proc. Natl. Acad. Sci. U.S.A.">
        <title>Rab GTPase-Myo5B complexes control membrane recycling and epithelial polarization.</title>
        <authorList>
            <person name="Roland J.T."/>
            <person name="Bryant D.M."/>
            <person name="Datta A."/>
            <person name="Itzen A."/>
            <person name="Mostov K.E."/>
            <person name="Goldenring J.R."/>
        </authorList>
    </citation>
    <scope>FUNCTION</scope>
    <scope>INTERACTION WITH MYO5B</scope>
</reference>
<reference key="24">
    <citation type="journal article" date="2011" name="Sci. Signal.">
        <title>System-wide temporal characterization of the proteome and phosphoproteome of human embryonic stem cell differentiation.</title>
        <authorList>
            <person name="Rigbolt K.T."/>
            <person name="Prokhorova T.A."/>
            <person name="Akimov V."/>
            <person name="Henningsen J."/>
            <person name="Johansen P.T."/>
            <person name="Kratchmarova I."/>
            <person name="Kassem M."/>
            <person name="Mann M."/>
            <person name="Olsen J.V."/>
            <person name="Blagoev B."/>
        </authorList>
    </citation>
    <scope>PHOSPHORYLATION [LARGE SCALE ANALYSIS] AT SER-185</scope>
    <scope>IDENTIFICATION BY MASS SPECTROMETRY [LARGE SCALE ANALYSIS]</scope>
</reference>
<reference key="25">
    <citation type="journal article" date="2011" name="Traffic">
        <title>Rab GTPases regulating phagosome maturation are differentially recruited to mycobacterial phagosomes.</title>
        <authorList>
            <person name="Seto S."/>
            <person name="Tsujimura K."/>
            <person name="Koide Y."/>
        </authorList>
    </citation>
    <scope>SUBCELLULAR LOCATION</scope>
</reference>
<reference key="26">
    <citation type="journal article" date="2012" name="Cell Res.">
        <title>A SNX10/V-ATPase pathway regulates ciliogenesis in vitro and in vivo.</title>
        <authorList>
            <person name="Chen Y."/>
            <person name="Wu B."/>
            <person name="Xu L."/>
            <person name="Li H."/>
            <person name="Xia J."/>
            <person name="Yin W."/>
            <person name="Li Z."/>
            <person name="Shi D."/>
            <person name="Li S."/>
            <person name="Lin S."/>
            <person name="Shu X."/>
            <person name="Pei D."/>
        </authorList>
    </citation>
    <scope>FUNCTION IN CILIOGENESIS</scope>
    <scope>SUBCELLULAR LOCATION</scope>
</reference>
<reference key="27">
    <citation type="journal article" date="2012" name="Hum. Mol. Genet.">
        <title>OCRL localizes to the primary cilium: a new role for cilia in Lowe syndrome.</title>
        <authorList>
            <person name="Luo N."/>
            <person name="West C.C."/>
            <person name="Murga-Zamalloa C.A."/>
            <person name="Sun L."/>
            <person name="Anderson R.M."/>
            <person name="Wells C.D."/>
            <person name="Weinreb R.N."/>
            <person name="Travers J.B."/>
            <person name="Khanna H."/>
            <person name="Sun Y."/>
        </authorList>
    </citation>
    <scope>INTERACTION WITH OCRL</scope>
</reference>
<reference key="28">
    <citation type="journal article" date="2013" name="J. Proteome Res.">
        <title>Toward a comprehensive characterization of a human cancer cell phosphoproteome.</title>
        <authorList>
            <person name="Zhou H."/>
            <person name="Di Palma S."/>
            <person name="Preisinger C."/>
            <person name="Peng M."/>
            <person name="Polat A.N."/>
            <person name="Heck A.J."/>
            <person name="Mohammed S."/>
        </authorList>
    </citation>
    <scope>PHOSPHORYLATION [LARGE SCALE ANALYSIS] AT SER-185</scope>
    <scope>IDENTIFICATION BY MASS SPECTROMETRY [LARGE SCALE ANALYSIS]</scope>
    <source>
        <tissue>Cervix carcinoma</tissue>
        <tissue>Erythroleukemia</tissue>
    </source>
</reference>
<reference key="29">
    <citation type="journal article" date="2014" name="J. Proteomics">
        <title>An enzyme assisted RP-RPLC approach for in-depth analysis of human liver phosphoproteome.</title>
        <authorList>
            <person name="Bian Y."/>
            <person name="Song C."/>
            <person name="Cheng K."/>
            <person name="Dong M."/>
            <person name="Wang F."/>
            <person name="Huang J."/>
            <person name="Sun D."/>
            <person name="Wang L."/>
            <person name="Ye M."/>
            <person name="Zou H."/>
        </authorList>
    </citation>
    <scope>PHOSPHORYLATION [LARGE SCALE ANALYSIS] AT SER-185</scope>
    <scope>IDENTIFICATION BY MASS SPECTROMETRY [LARGE SCALE ANALYSIS]</scope>
    <source>
        <tissue>Liver</tissue>
    </source>
</reference>
<reference key="30">
    <citation type="journal article" date="2015" name="J. Biol. Chem.">
        <title>Small GTPase Rab2B and Its Specific Binding Protein Golgi-associated Rab2B Interactor-like 4 (GARI-L4) Regulate Golgi Morphology.</title>
        <authorList>
            <person name="Aizawa M."/>
            <person name="Fukuda M."/>
        </authorList>
    </citation>
    <scope>FUNCTION</scope>
</reference>
<reference key="31">
    <citation type="journal article" date="2015" name="PLoS Biol.">
        <title>GSK3beta-Dzip1-Rab8 cascade regulates ciliogenesis after mitosis.</title>
        <authorList>
            <person name="Zhang B."/>
            <person name="Zhang T."/>
            <person name="Wang G."/>
            <person name="Wang G."/>
            <person name="Chi W."/>
            <person name="Jiang Q."/>
            <person name="Zhang C."/>
        </authorList>
    </citation>
    <scope>INTERACTION WITH DZIP1</scope>
</reference>
<reference key="32">
    <citation type="journal article" date="2015" name="Proteomics">
        <title>N-terminome analysis of the human mitochondrial proteome.</title>
        <authorList>
            <person name="Vaca Jacome A.S."/>
            <person name="Rabilloud T."/>
            <person name="Schaeffer-Reiss C."/>
            <person name="Rompais M."/>
            <person name="Ayoub D."/>
            <person name="Lane L."/>
            <person name="Bairoch A."/>
            <person name="Van Dorsselaer A."/>
            <person name="Carapito C."/>
        </authorList>
    </citation>
    <scope>IDENTIFICATION BY MASS SPECTROMETRY [LARGE SCALE ANALYSIS]</scope>
</reference>
<reference key="33">
    <citation type="journal article" date="2016" name="Elife">
        <title>Phosphoproteomics reveals that Parkinson's disease kinase LRRK2 regulates a subset of Rab GTPases.</title>
        <authorList>
            <person name="Steger M."/>
            <person name="Tonelli F."/>
            <person name="Ito G."/>
            <person name="Davies P."/>
            <person name="Trost M."/>
            <person name="Vetter M."/>
            <person name="Wachter S."/>
            <person name="Lorentzen E."/>
            <person name="Duddy G."/>
            <person name="Wilson S."/>
            <person name="Baptista M.A."/>
            <person name="Fiske B.K."/>
            <person name="Fell M.J."/>
            <person name="Morrow J.A."/>
            <person name="Reith A.D."/>
            <person name="Alessi D.R."/>
            <person name="Mann M."/>
        </authorList>
    </citation>
    <scope>INTERACTION WITH LRRK2; GDI1; GDI2; CHM; CHML; RABGGTA; RABGGTB; RAB3IP; TBC1D15 AND INPP5B</scope>
    <scope>SUBCELLULAR LOCATION</scope>
    <scope>PHOSPHORYLATION AT THR-72</scope>
    <scope>MUTAGENESIS OF THR-72</scope>
</reference>
<reference key="34">
    <citation type="journal article" date="2016" name="EMBO J.">
        <title>Loss of C9ORF72 impairs autophagy and synergizes with polyQ Ataxin-2 to induce motor neuron dysfunction and cell death.</title>
        <authorList>
            <person name="Sellier C."/>
            <person name="Campanari M.L."/>
            <person name="Julie Corbier C."/>
            <person name="Gaucherot A."/>
            <person name="Kolb-Cheynel I."/>
            <person name="Oulad-Abdelghani M."/>
            <person name="Ruffenach F."/>
            <person name="Page A."/>
            <person name="Ciura S."/>
            <person name="Kabashi E."/>
            <person name="Charlet-Berguerand N."/>
        </authorList>
    </citation>
    <scope>FUNCTION</scope>
</reference>
<reference key="35">
    <citation type="journal article" date="2017" name="Elife">
        <title>Systematic proteomic analysis of LRRK2-mediated Rab GTPase phosphorylation establishes a connection to ciliogenesis.</title>
        <authorList>
            <person name="Steger M."/>
            <person name="Diez F."/>
            <person name="Dhekne H.S."/>
            <person name="Lis P."/>
            <person name="Nirujogi R.S."/>
            <person name="Karayel O."/>
            <person name="Tonelli F."/>
            <person name="Martinez T.N."/>
            <person name="Lorentzen E."/>
            <person name="Pfeffer S.R."/>
            <person name="Alessi D.R."/>
            <person name="Mann M."/>
        </authorList>
    </citation>
    <scope>INTERACTION WITH GDI1; GDI2; CHM; CHML; RILPL1 AND RILPL2</scope>
    <scope>SUBCELLULAR LOCATION</scope>
    <scope>PHOSPHORYLATION AT THR-72</scope>
    <scope>MUTAGENESIS OF THR-72</scope>
</reference>
<reference key="36">
    <citation type="journal article" date="2018" name="Elife">
        <title>A pathway for Parkinson's Disease LRRK2 kinase to block primary cilia and Sonic hedgehog signaling in the brain.</title>
        <authorList>
            <person name="Dhekne H.S."/>
            <person name="Yanatori I."/>
            <person name="Gomez R.C."/>
            <person name="Tonelli F."/>
            <person name="Diez F."/>
            <person name="Schuele B."/>
            <person name="Steger M."/>
            <person name="Alessi D.R."/>
            <person name="Pfeffer S.R."/>
        </authorList>
    </citation>
    <scope>FUNCTION</scope>
    <scope>INTERACTION WITH RILPL1</scope>
    <scope>SUBCELLULAR LOCATION</scope>
    <scope>PHOSPHORYLATION AT THR-72</scope>
    <scope>MUTAGENESIS OF THR-72</scope>
</reference>
<reference evidence="31" key="37">
    <citation type="journal article" date="2018" name="Proc. Natl. Acad. Sci. U.S.A.">
        <title>LRRK2 and its substrate Rab GTPases are sequentially targeted onto stressed lysosomes and maintain their homeostasis.</title>
        <authorList>
            <person name="Eguchi T."/>
            <person name="Kuwahara T."/>
            <person name="Sakurai M."/>
            <person name="Komori T."/>
            <person name="Fujimoto T."/>
            <person name="Ito G."/>
            <person name="Yoshimura S.I."/>
            <person name="Harada A."/>
            <person name="Fukuda M."/>
            <person name="Koike M."/>
            <person name="Iwatsubo T."/>
        </authorList>
    </citation>
    <scope>FUNCTION</scope>
    <scope>SUBCELLULAR LOCATION</scope>
    <scope>PHOSPHORYLATION AT THR-72</scope>
    <scope>MUTAGENESIS OF THR-72</scope>
</reference>
<reference key="38">
    <citation type="journal article" date="2020" name="J. Cell Biol.">
        <title>GRAF2, WDR44, and MICAL1 mediate Rab8/10/11-dependent export of E-cadherin, MMP14, and CFTR DeltaF508.</title>
        <authorList>
            <person name="Lucken-Ardjomande Haesler S."/>
            <person name="Vallis Y."/>
            <person name="Pasche M."/>
            <person name="McMahon H.T."/>
        </authorList>
    </citation>
    <scope>FUNCTION</scope>
    <scope>INTERACTION WITH MICAL1</scope>
    <scope>SUBCELLULAR LOCATION</scope>
</reference>
<reference evidence="37" key="39">
    <citation type="journal article" date="2011" name="EMBO J.">
        <title>A structural basis for Lowe syndrome caused by mutations in the Rab-binding domain of OCRL1.</title>
        <authorList>
            <person name="Hou X."/>
            <person name="Hagemann N."/>
            <person name="Schoebel S."/>
            <person name="Blankenfeldt W."/>
            <person name="Goody R.S."/>
            <person name="Erdmann K.S."/>
            <person name="Itzen A."/>
        </authorList>
    </citation>
    <scope>X-RAY CRYSTALLOGRAPHY (2.0 ANGSTROMS) OF 6-176 IN COMPLEX MG(2+); GTP ANALOG AND OCRL</scope>
    <scope>COFACTOR</scope>
</reference>
<reference evidence="38" key="40">
    <citation type="journal article" date="2016" name="Elife">
        <title>bMERB domains are bivalent Rab8 family effectors evolved by gene duplication.</title>
        <authorList>
            <person name="Rai A."/>
            <person name="Oprisko A."/>
            <person name="Campos J."/>
            <person name="Fu Y."/>
            <person name="Friese T."/>
            <person name="Itzen A."/>
            <person name="Goody R.S."/>
            <person name="Gazdag E.M."/>
            <person name="Muller M.P."/>
        </authorList>
    </citation>
    <scope>X-RAY CRYSTALLOGRAPHY (2.85 ANGSTROMS) OF 1-207 IN COMPLEX WITH MG(2+); GTP ANALOG AND MICALCL</scope>
    <scope>INTERACTION WITH MICAL3; MICAL1; EHBP1 AND EHBP1L1</scope>
    <scope>COFACTOR</scope>
</reference>
<reference key="41">
    <citation type="journal article" date="2010" name="Hum. Mol. Genet.">
        <title>Interaction of retinitis pigmentosa GTPase regulator (RPGR) with RAB8A GTPase: implications for cilia dysfunction and photoreceptor degeneration.</title>
        <authorList>
            <person name="Murga-Zamalloa C.A."/>
            <person name="Atkins S.J."/>
            <person name="Peranen J."/>
            <person name="Swaroop A."/>
            <person name="Khanna H."/>
        </authorList>
    </citation>
    <scope>FUNCTION</scope>
    <scope>INTERACTION WITH RPGR</scope>
    <scope>ACTIVITY REGULATION</scope>
    <scope>MUTAGENESIS OF THR-22 AND GLN-67</scope>
</reference>
<sequence>MAKTYDYLFKLLLIGDSGVGKTCVLFRFSEDAFNSTFISTIGIDFKIRTIELDGKRIKLQIWDTAGQERFRTITTAYYRGAMGIMLVYDITNEKSFDNIRNWIRNIEEHASADVEKMILGNKCDVNDKRQVSKERGEKLALDYGIKFMETSAKANINVENAFFTLARDIKAKMDKKLEGNSPQGSNQGVKITPDQQKRSSFFRCVLL</sequence>
<proteinExistence type="evidence at protein level"/>
<accession>P61006</accession>
<accession>B4DEK7</accession>
<accession>P24407</accession>
<accession>Q6FHV5</accession>
<organism>
    <name type="scientific">Homo sapiens</name>
    <name type="common">Human</name>
    <dbReference type="NCBI Taxonomy" id="9606"/>
    <lineage>
        <taxon>Eukaryota</taxon>
        <taxon>Metazoa</taxon>
        <taxon>Chordata</taxon>
        <taxon>Craniata</taxon>
        <taxon>Vertebrata</taxon>
        <taxon>Euteleostomi</taxon>
        <taxon>Mammalia</taxon>
        <taxon>Eutheria</taxon>
        <taxon>Euarchontoglires</taxon>
        <taxon>Primates</taxon>
        <taxon>Haplorrhini</taxon>
        <taxon>Catarrhini</taxon>
        <taxon>Hominidae</taxon>
        <taxon>Homo</taxon>
    </lineage>
</organism>